<evidence type="ECO:0000255" key="1">
    <source>
        <dbReference type="HAMAP-Rule" id="MF_00154"/>
    </source>
</evidence>
<organism>
    <name type="scientific">Staphylococcus aureus (strain MSSA476)</name>
    <dbReference type="NCBI Taxonomy" id="282459"/>
    <lineage>
        <taxon>Bacteria</taxon>
        <taxon>Bacillati</taxon>
        <taxon>Bacillota</taxon>
        <taxon>Bacilli</taxon>
        <taxon>Bacillales</taxon>
        <taxon>Staphylococcaceae</taxon>
        <taxon>Staphylococcus</taxon>
    </lineage>
</organism>
<reference key="1">
    <citation type="journal article" date="2004" name="Proc. Natl. Acad. Sci. U.S.A.">
        <title>Complete genomes of two clinical Staphylococcus aureus strains: evidence for the rapid evolution of virulence and drug resistance.</title>
        <authorList>
            <person name="Holden M.T.G."/>
            <person name="Feil E.J."/>
            <person name="Lindsay J.A."/>
            <person name="Peacock S.J."/>
            <person name="Day N.P.J."/>
            <person name="Enright M.C."/>
            <person name="Foster T.J."/>
            <person name="Moore C.E."/>
            <person name="Hurst L."/>
            <person name="Atkin R."/>
            <person name="Barron A."/>
            <person name="Bason N."/>
            <person name="Bentley S.D."/>
            <person name="Chillingworth C."/>
            <person name="Chillingworth T."/>
            <person name="Churcher C."/>
            <person name="Clark L."/>
            <person name="Corton C."/>
            <person name="Cronin A."/>
            <person name="Doggett J."/>
            <person name="Dowd L."/>
            <person name="Feltwell T."/>
            <person name="Hance Z."/>
            <person name="Harris B."/>
            <person name="Hauser H."/>
            <person name="Holroyd S."/>
            <person name="Jagels K."/>
            <person name="James K.D."/>
            <person name="Lennard N."/>
            <person name="Line A."/>
            <person name="Mayes R."/>
            <person name="Moule S."/>
            <person name="Mungall K."/>
            <person name="Ormond D."/>
            <person name="Quail M.A."/>
            <person name="Rabbinowitsch E."/>
            <person name="Rutherford K.M."/>
            <person name="Sanders M."/>
            <person name="Sharp S."/>
            <person name="Simmonds M."/>
            <person name="Stevens K."/>
            <person name="Whitehead S."/>
            <person name="Barrell B.G."/>
            <person name="Spratt B.G."/>
            <person name="Parkhill J."/>
        </authorList>
    </citation>
    <scope>NUCLEOTIDE SEQUENCE [LARGE SCALE GENOMIC DNA]</scope>
    <source>
        <strain>MSSA476</strain>
    </source>
</reference>
<accession>Q6GA98</accession>
<gene>
    <name evidence="1" type="primary">ctaB</name>
    <name type="ordered locus">SAS1051</name>
</gene>
<dbReference type="EC" id="2.5.1.141" evidence="1"/>
<dbReference type="EMBL" id="BX571857">
    <property type="protein sequence ID" value="CAG42825.1"/>
    <property type="molecule type" value="Genomic_DNA"/>
</dbReference>
<dbReference type="SMR" id="Q6GA98"/>
<dbReference type="KEGG" id="sas:SAS1051"/>
<dbReference type="HOGENOM" id="CLU_029631_0_0_9"/>
<dbReference type="UniPathway" id="UPA00834">
    <property type="reaction ID" value="UER00712"/>
</dbReference>
<dbReference type="GO" id="GO:0005886">
    <property type="term" value="C:plasma membrane"/>
    <property type="evidence" value="ECO:0007669"/>
    <property type="project" value="UniProtKB-SubCell"/>
</dbReference>
<dbReference type="GO" id="GO:0008495">
    <property type="term" value="F:protoheme IX farnesyltransferase activity"/>
    <property type="evidence" value="ECO:0007669"/>
    <property type="project" value="UniProtKB-UniRule"/>
</dbReference>
<dbReference type="GO" id="GO:0048034">
    <property type="term" value="P:heme O biosynthetic process"/>
    <property type="evidence" value="ECO:0007669"/>
    <property type="project" value="UniProtKB-UniRule"/>
</dbReference>
<dbReference type="CDD" id="cd13957">
    <property type="entry name" value="PT_UbiA_Cox10"/>
    <property type="match status" value="1"/>
</dbReference>
<dbReference type="Gene3D" id="1.10.357.140">
    <property type="entry name" value="UbiA prenyltransferase"/>
    <property type="match status" value="1"/>
</dbReference>
<dbReference type="HAMAP" id="MF_00154">
    <property type="entry name" value="CyoE_CtaB"/>
    <property type="match status" value="1"/>
</dbReference>
<dbReference type="InterPro" id="IPR006369">
    <property type="entry name" value="Protohaem_IX_farnesylTrfase"/>
</dbReference>
<dbReference type="InterPro" id="IPR000537">
    <property type="entry name" value="UbiA_prenyltransferase"/>
</dbReference>
<dbReference type="InterPro" id="IPR044878">
    <property type="entry name" value="UbiA_sf"/>
</dbReference>
<dbReference type="NCBIfam" id="TIGR01473">
    <property type="entry name" value="cyoE_ctaB"/>
    <property type="match status" value="1"/>
</dbReference>
<dbReference type="PANTHER" id="PTHR43448">
    <property type="entry name" value="PROTOHEME IX FARNESYLTRANSFERASE, MITOCHONDRIAL"/>
    <property type="match status" value="1"/>
</dbReference>
<dbReference type="PANTHER" id="PTHR43448:SF2">
    <property type="entry name" value="PROTOHEME IX FARNESYLTRANSFERASE, MITOCHONDRIAL"/>
    <property type="match status" value="1"/>
</dbReference>
<dbReference type="Pfam" id="PF01040">
    <property type="entry name" value="UbiA"/>
    <property type="match status" value="1"/>
</dbReference>
<name>COXX_STAAS</name>
<proteinExistence type="inferred from homology"/>
<sequence>MSKEHTLSQNISRVNFKELQQIIKMGLVQGNLIPAFAGAWLAVVMTNHSFLSSIPQILLMLLGSTLIMGGACALNNYYDQDIDRIMPSKQNRPTVNNRITDQNLLLLSFGMMLVGEICLFLLNIPSGVLGLMGIVGYVSYYSIWSKRHTTWNTVIGSFPGAVPPLIGWVAIEGQISLTAIALFLVVFCWQPIHFYALAIKRKDEYALANIPMLPSVKGFKRTRVSMFIWLIILLPVPLLLINLGVVFVVLATLLNLGWIALGLTTFKKNSDQTKWATQMFIYSLNYLVIFFVLAVIVSLLTLI</sequence>
<keyword id="KW-1003">Cell membrane</keyword>
<keyword id="KW-0350">Heme biosynthesis</keyword>
<keyword id="KW-0472">Membrane</keyword>
<keyword id="KW-0808">Transferase</keyword>
<keyword id="KW-0812">Transmembrane</keyword>
<keyword id="KW-1133">Transmembrane helix</keyword>
<protein>
    <recommendedName>
        <fullName evidence="1">Protoheme IX farnesyltransferase</fullName>
        <ecNumber evidence="1">2.5.1.141</ecNumber>
    </recommendedName>
    <alternativeName>
        <fullName evidence="1">Heme B farnesyltransferase</fullName>
    </alternativeName>
    <alternativeName>
        <fullName evidence="1">Heme O synthase</fullName>
    </alternativeName>
</protein>
<feature type="chain" id="PRO_0000327157" description="Protoheme IX farnesyltransferase">
    <location>
        <begin position="1"/>
        <end position="303"/>
    </location>
</feature>
<feature type="transmembrane region" description="Helical" evidence="1">
    <location>
        <begin position="25"/>
        <end position="45"/>
    </location>
</feature>
<feature type="transmembrane region" description="Helical" evidence="1">
    <location>
        <begin position="54"/>
        <end position="74"/>
    </location>
</feature>
<feature type="transmembrane region" description="Helical" evidence="1">
    <location>
        <begin position="104"/>
        <end position="124"/>
    </location>
</feature>
<feature type="transmembrane region" description="Helical" evidence="1">
    <location>
        <begin position="125"/>
        <end position="145"/>
    </location>
</feature>
<feature type="transmembrane region" description="Helical" evidence="1">
    <location>
        <begin position="151"/>
        <end position="171"/>
    </location>
</feature>
<feature type="transmembrane region" description="Helical" evidence="1">
    <location>
        <begin position="179"/>
        <end position="199"/>
    </location>
</feature>
<feature type="transmembrane region" description="Helical" evidence="1">
    <location>
        <begin position="227"/>
        <end position="247"/>
    </location>
</feature>
<feature type="transmembrane region" description="Helical" evidence="1">
    <location>
        <begin position="248"/>
        <end position="268"/>
    </location>
</feature>
<feature type="transmembrane region" description="Helical" evidence="1">
    <location>
        <begin position="280"/>
        <end position="300"/>
    </location>
</feature>
<comment type="function">
    <text evidence="1">Converts heme B (protoheme IX) to heme O by substitution of the vinyl group on carbon 2 of heme B porphyrin ring with a hydroxyethyl farnesyl side group.</text>
</comment>
<comment type="catalytic activity">
    <reaction evidence="1">
        <text>heme b + (2E,6E)-farnesyl diphosphate + H2O = Fe(II)-heme o + diphosphate</text>
        <dbReference type="Rhea" id="RHEA:28070"/>
        <dbReference type="ChEBI" id="CHEBI:15377"/>
        <dbReference type="ChEBI" id="CHEBI:33019"/>
        <dbReference type="ChEBI" id="CHEBI:60344"/>
        <dbReference type="ChEBI" id="CHEBI:60530"/>
        <dbReference type="ChEBI" id="CHEBI:175763"/>
        <dbReference type="EC" id="2.5.1.141"/>
    </reaction>
</comment>
<comment type="pathway">
    <text evidence="1">Porphyrin-containing compound metabolism; heme O biosynthesis; heme O from protoheme: step 1/1.</text>
</comment>
<comment type="subunit">
    <text evidence="1">Interacts with CtaA.</text>
</comment>
<comment type="subcellular location">
    <subcellularLocation>
        <location evidence="1">Cell membrane</location>
        <topology evidence="1">Multi-pass membrane protein</topology>
    </subcellularLocation>
</comment>
<comment type="miscellaneous">
    <text evidence="1">Carbon 2 of the heme B porphyrin ring is defined according to the Fischer nomenclature.</text>
</comment>
<comment type="similarity">
    <text evidence="1">Belongs to the UbiA prenyltransferase family. Protoheme IX farnesyltransferase subfamily.</text>
</comment>